<evidence type="ECO:0000255" key="1">
    <source>
        <dbReference type="HAMAP-Rule" id="MF_00012"/>
    </source>
</evidence>
<comment type="function">
    <text evidence="1">Functions in the biosynthesis of branched-chain amino acids. Catalyzes the dehydration of (2R,3R)-2,3-dihydroxy-3-methylpentanoate (2,3-dihydroxy-3-methylvalerate) into 2-oxo-3-methylpentanoate (2-oxo-3-methylvalerate) and of (2R)-2,3-dihydroxy-3-methylbutanoate (2,3-dihydroxyisovalerate) into 2-oxo-3-methylbutanoate (2-oxoisovalerate), the penultimate precursor to L-isoleucine and L-valine, respectively.</text>
</comment>
<comment type="catalytic activity">
    <reaction evidence="1">
        <text>(2R)-2,3-dihydroxy-3-methylbutanoate = 3-methyl-2-oxobutanoate + H2O</text>
        <dbReference type="Rhea" id="RHEA:24809"/>
        <dbReference type="ChEBI" id="CHEBI:11851"/>
        <dbReference type="ChEBI" id="CHEBI:15377"/>
        <dbReference type="ChEBI" id="CHEBI:49072"/>
        <dbReference type="EC" id="4.2.1.9"/>
    </reaction>
    <physiologicalReaction direction="left-to-right" evidence="1">
        <dbReference type="Rhea" id="RHEA:24810"/>
    </physiologicalReaction>
</comment>
<comment type="catalytic activity">
    <reaction evidence="1">
        <text>(2R,3R)-2,3-dihydroxy-3-methylpentanoate = (S)-3-methyl-2-oxopentanoate + H2O</text>
        <dbReference type="Rhea" id="RHEA:27694"/>
        <dbReference type="ChEBI" id="CHEBI:15377"/>
        <dbReference type="ChEBI" id="CHEBI:35146"/>
        <dbReference type="ChEBI" id="CHEBI:49258"/>
        <dbReference type="EC" id="4.2.1.9"/>
    </reaction>
    <physiologicalReaction direction="left-to-right" evidence="1">
        <dbReference type="Rhea" id="RHEA:27695"/>
    </physiologicalReaction>
</comment>
<comment type="cofactor">
    <cofactor evidence="1">
        <name>[2Fe-2S] cluster</name>
        <dbReference type="ChEBI" id="CHEBI:190135"/>
    </cofactor>
    <text evidence="1">Binds 1 [2Fe-2S] cluster per subunit. This cluster acts as a Lewis acid cofactor.</text>
</comment>
<comment type="cofactor">
    <cofactor evidence="1">
        <name>Mg(2+)</name>
        <dbReference type="ChEBI" id="CHEBI:18420"/>
    </cofactor>
</comment>
<comment type="pathway">
    <text evidence="1">Amino-acid biosynthesis; L-isoleucine biosynthesis; L-isoleucine from 2-oxobutanoate: step 3/4.</text>
</comment>
<comment type="pathway">
    <text evidence="1">Amino-acid biosynthesis; L-valine biosynthesis; L-valine from pyruvate: step 3/4.</text>
</comment>
<comment type="subunit">
    <text evidence="1">Homodimer.</text>
</comment>
<comment type="similarity">
    <text evidence="1">Belongs to the IlvD/Edd family.</text>
</comment>
<feature type="chain" id="PRO_1000073981" description="Dihydroxy-acid dehydratase">
    <location>
        <begin position="1"/>
        <end position="561"/>
    </location>
</feature>
<feature type="active site" description="Proton acceptor" evidence="1">
    <location>
        <position position="473"/>
    </location>
</feature>
<feature type="binding site" evidence="1">
    <location>
        <position position="50"/>
    </location>
    <ligand>
        <name>[2Fe-2S] cluster</name>
        <dbReference type="ChEBI" id="CHEBI:190135"/>
    </ligand>
</feature>
<feature type="binding site" evidence="1">
    <location>
        <position position="82"/>
    </location>
    <ligand>
        <name>Mg(2+)</name>
        <dbReference type="ChEBI" id="CHEBI:18420"/>
    </ligand>
</feature>
<feature type="binding site" evidence="1">
    <location>
        <position position="123"/>
    </location>
    <ligand>
        <name>[2Fe-2S] cluster</name>
        <dbReference type="ChEBI" id="CHEBI:190135"/>
    </ligand>
</feature>
<feature type="binding site" evidence="1">
    <location>
        <position position="124"/>
    </location>
    <ligand>
        <name>Mg(2+)</name>
        <dbReference type="ChEBI" id="CHEBI:18420"/>
    </ligand>
</feature>
<feature type="binding site" description="via carbamate group" evidence="1">
    <location>
        <position position="125"/>
    </location>
    <ligand>
        <name>Mg(2+)</name>
        <dbReference type="ChEBI" id="CHEBI:18420"/>
    </ligand>
</feature>
<feature type="binding site" evidence="1">
    <location>
        <position position="195"/>
    </location>
    <ligand>
        <name>[2Fe-2S] cluster</name>
        <dbReference type="ChEBI" id="CHEBI:190135"/>
    </ligand>
</feature>
<feature type="binding site" evidence="1">
    <location>
        <position position="447"/>
    </location>
    <ligand>
        <name>Mg(2+)</name>
        <dbReference type="ChEBI" id="CHEBI:18420"/>
    </ligand>
</feature>
<feature type="modified residue" description="N6-carboxylysine" evidence="1">
    <location>
        <position position="125"/>
    </location>
</feature>
<gene>
    <name evidence="1" type="primary">ilvD</name>
    <name type="ordered locus">MAE_28670</name>
</gene>
<name>ILVD_MICAN</name>
<dbReference type="EC" id="4.2.1.9" evidence="1"/>
<dbReference type="EMBL" id="AP009552">
    <property type="protein sequence ID" value="BAG02689.1"/>
    <property type="molecule type" value="Genomic_DNA"/>
</dbReference>
<dbReference type="RefSeq" id="WP_012265889.1">
    <property type="nucleotide sequence ID" value="NC_010296.1"/>
</dbReference>
<dbReference type="SMR" id="B0JJP7"/>
<dbReference type="STRING" id="449447.MAE_28670"/>
<dbReference type="PaxDb" id="449447-MAE_28670"/>
<dbReference type="EnsemblBacteria" id="BAG02689">
    <property type="protein sequence ID" value="BAG02689"/>
    <property type="gene ID" value="MAE_28670"/>
</dbReference>
<dbReference type="KEGG" id="mar:MAE_28670"/>
<dbReference type="PATRIC" id="fig|449447.4.peg.2626"/>
<dbReference type="eggNOG" id="COG0129">
    <property type="taxonomic scope" value="Bacteria"/>
</dbReference>
<dbReference type="HOGENOM" id="CLU_014271_4_2_3"/>
<dbReference type="BioCyc" id="MAER449447:MAE_RS12530-MONOMER"/>
<dbReference type="UniPathway" id="UPA00047">
    <property type="reaction ID" value="UER00057"/>
</dbReference>
<dbReference type="UniPathway" id="UPA00049">
    <property type="reaction ID" value="UER00061"/>
</dbReference>
<dbReference type="Proteomes" id="UP000001510">
    <property type="component" value="Chromosome"/>
</dbReference>
<dbReference type="GO" id="GO:0051537">
    <property type="term" value="F:2 iron, 2 sulfur cluster binding"/>
    <property type="evidence" value="ECO:0007669"/>
    <property type="project" value="UniProtKB-UniRule"/>
</dbReference>
<dbReference type="GO" id="GO:0004160">
    <property type="term" value="F:dihydroxy-acid dehydratase activity"/>
    <property type="evidence" value="ECO:0007669"/>
    <property type="project" value="UniProtKB-UniRule"/>
</dbReference>
<dbReference type="GO" id="GO:0000287">
    <property type="term" value="F:magnesium ion binding"/>
    <property type="evidence" value="ECO:0007669"/>
    <property type="project" value="UniProtKB-UniRule"/>
</dbReference>
<dbReference type="GO" id="GO:0009097">
    <property type="term" value="P:isoleucine biosynthetic process"/>
    <property type="evidence" value="ECO:0007669"/>
    <property type="project" value="UniProtKB-UniRule"/>
</dbReference>
<dbReference type="GO" id="GO:0009099">
    <property type="term" value="P:L-valine biosynthetic process"/>
    <property type="evidence" value="ECO:0007669"/>
    <property type="project" value="UniProtKB-UniRule"/>
</dbReference>
<dbReference type="FunFam" id="3.50.30.80:FF:000001">
    <property type="entry name" value="Dihydroxy-acid dehydratase"/>
    <property type="match status" value="1"/>
</dbReference>
<dbReference type="Gene3D" id="3.50.30.80">
    <property type="entry name" value="IlvD/EDD C-terminal domain-like"/>
    <property type="match status" value="1"/>
</dbReference>
<dbReference type="HAMAP" id="MF_00012">
    <property type="entry name" value="IlvD"/>
    <property type="match status" value="1"/>
</dbReference>
<dbReference type="InterPro" id="IPR050165">
    <property type="entry name" value="DHAD_IlvD/Edd"/>
</dbReference>
<dbReference type="InterPro" id="IPR042096">
    <property type="entry name" value="Dihydro-acid_dehy_C"/>
</dbReference>
<dbReference type="InterPro" id="IPR004404">
    <property type="entry name" value="DihydroxyA_deHydtase"/>
</dbReference>
<dbReference type="InterPro" id="IPR020558">
    <property type="entry name" value="DiOHA_6PGluconate_deHydtase_CS"/>
</dbReference>
<dbReference type="InterPro" id="IPR056740">
    <property type="entry name" value="ILV_EDD_C"/>
</dbReference>
<dbReference type="InterPro" id="IPR000581">
    <property type="entry name" value="ILV_EDD_N"/>
</dbReference>
<dbReference type="InterPro" id="IPR037237">
    <property type="entry name" value="IlvD/EDD_N"/>
</dbReference>
<dbReference type="NCBIfam" id="TIGR00110">
    <property type="entry name" value="ilvD"/>
    <property type="match status" value="1"/>
</dbReference>
<dbReference type="NCBIfam" id="NF002068">
    <property type="entry name" value="PRK00911.1"/>
    <property type="match status" value="1"/>
</dbReference>
<dbReference type="PANTHER" id="PTHR21000">
    <property type="entry name" value="DIHYDROXY-ACID DEHYDRATASE DAD"/>
    <property type="match status" value="1"/>
</dbReference>
<dbReference type="PANTHER" id="PTHR21000:SF5">
    <property type="entry name" value="DIHYDROXY-ACID DEHYDRATASE, MITOCHONDRIAL"/>
    <property type="match status" value="1"/>
</dbReference>
<dbReference type="Pfam" id="PF24877">
    <property type="entry name" value="ILV_EDD_C"/>
    <property type="match status" value="1"/>
</dbReference>
<dbReference type="Pfam" id="PF00920">
    <property type="entry name" value="ILVD_EDD_N"/>
    <property type="match status" value="1"/>
</dbReference>
<dbReference type="SUPFAM" id="SSF143975">
    <property type="entry name" value="IlvD/EDD N-terminal domain-like"/>
    <property type="match status" value="1"/>
</dbReference>
<dbReference type="SUPFAM" id="SSF52016">
    <property type="entry name" value="LeuD/IlvD-like"/>
    <property type="match status" value="1"/>
</dbReference>
<dbReference type="PROSITE" id="PS00886">
    <property type="entry name" value="ILVD_EDD_1"/>
    <property type="match status" value="1"/>
</dbReference>
<dbReference type="PROSITE" id="PS00887">
    <property type="entry name" value="ILVD_EDD_2"/>
    <property type="match status" value="1"/>
</dbReference>
<proteinExistence type="inferred from homology"/>
<organism>
    <name type="scientific">Microcystis aeruginosa (strain NIES-843 / IAM M-2473)</name>
    <dbReference type="NCBI Taxonomy" id="449447"/>
    <lineage>
        <taxon>Bacteria</taxon>
        <taxon>Bacillati</taxon>
        <taxon>Cyanobacteriota</taxon>
        <taxon>Cyanophyceae</taxon>
        <taxon>Oscillatoriophycideae</taxon>
        <taxon>Chroococcales</taxon>
        <taxon>Microcystaceae</taxon>
        <taxon>Microcystis</taxon>
    </lineage>
</organism>
<reference key="1">
    <citation type="journal article" date="2007" name="DNA Res.">
        <title>Complete genomic structure of the bloom-forming toxic cyanobacterium Microcystis aeruginosa NIES-843.</title>
        <authorList>
            <person name="Kaneko T."/>
            <person name="Nakajima N."/>
            <person name="Okamoto S."/>
            <person name="Suzuki I."/>
            <person name="Tanabe Y."/>
            <person name="Tamaoki M."/>
            <person name="Nakamura Y."/>
            <person name="Kasai F."/>
            <person name="Watanabe A."/>
            <person name="Kawashima K."/>
            <person name="Kishida Y."/>
            <person name="Ono A."/>
            <person name="Shimizu Y."/>
            <person name="Takahashi C."/>
            <person name="Minami C."/>
            <person name="Fujishiro T."/>
            <person name="Kohara M."/>
            <person name="Katoh M."/>
            <person name="Nakazaki N."/>
            <person name="Nakayama S."/>
            <person name="Yamada M."/>
            <person name="Tabata S."/>
            <person name="Watanabe M.M."/>
        </authorList>
    </citation>
    <scope>NUCLEOTIDE SEQUENCE [LARGE SCALE GENOMIC DNA]</scope>
    <source>
        <strain>NIES-843 / IAM M-247</strain>
    </source>
</reference>
<protein>
    <recommendedName>
        <fullName evidence="1">Dihydroxy-acid dehydratase</fullName>
        <shortName evidence="1">DAD</shortName>
        <ecNumber evidence="1">4.2.1.9</ecNumber>
    </recommendedName>
</protein>
<accession>B0JJP7</accession>
<keyword id="KW-0001">2Fe-2S</keyword>
<keyword id="KW-0028">Amino-acid biosynthesis</keyword>
<keyword id="KW-0100">Branched-chain amino acid biosynthesis</keyword>
<keyword id="KW-0408">Iron</keyword>
<keyword id="KW-0411">Iron-sulfur</keyword>
<keyword id="KW-0456">Lyase</keyword>
<keyword id="KW-0460">Magnesium</keyword>
<keyword id="KW-0479">Metal-binding</keyword>
<sequence>MADNYRSRIVTQGTQRSPNRAMLRAVGFGDEDFSKPIIGIANGFSTITPCNMGINDLAMRAEAATRLAGGMPQLFGTITISDGISMGTEGMKYSLVSREVIADSIETVCNGQSLDGVLAIGGCDKNMPGAMIAMARMNIPAIFVYGGTIKPGRYKDCDLTVVSSFEAVGQYSAGKISEEDLIGIERNACPGAGSCGGMFTANTMSSIFEAMGMSLPYSSTMAAEDAEKADSTEESAKVLVEAVRKQILPSQILTRKAFENAISVIMAVGGSTNAVLHLLAISRTIGVELSIDDFETIRQRVPVICDLKPSGRYVTVDLHKAGGIPQVMKILLVNGLLHGDALTISGQTIAEILADIPDQPPSGQDVIRPFSNPVYKEGHLAILKGNLATEGAVAKISGVKTPVITGPARVFESEETCLEAILAGKIQAGDVVVVRYEGPVGGPGMREMLAPTSAIIGAGLGDSVGLITDGRFSGGTYGMVVGHVAPEAAVGGTIALVEEGDQITIDARQRLLSLNVSEEELTRRRNHWQPRPPRYKTGILGKFAKLVSSSSLGALTDLNLF</sequence>